<organism>
    <name type="scientific">Methanocaldococcus jannaschii (strain ATCC 43067 / DSM 2661 / JAL-1 / JCM 10045 / NBRC 100440)</name>
    <name type="common">Methanococcus jannaschii</name>
    <dbReference type="NCBI Taxonomy" id="243232"/>
    <lineage>
        <taxon>Archaea</taxon>
        <taxon>Methanobacteriati</taxon>
        <taxon>Methanobacteriota</taxon>
        <taxon>Methanomada group</taxon>
        <taxon>Methanococci</taxon>
        <taxon>Methanococcales</taxon>
        <taxon>Methanocaldococcaceae</taxon>
        <taxon>Methanocaldococcus</taxon>
    </lineage>
</organism>
<sequence length="292" mass="32783">MIRIGTRGSKLALYQANKVAELLKNLGYKVEIKIIKTTGDRVLDKKLSDIGIGVFTKELDLAMLNNEIDIAVHSLKDIPTIWNENLMVGAVLERDSYHDLLIWNKDIDFNEDSKIVIGTSSMRRRAFLKFIYPNAKFELLRGNVDTRLRKLKEGLYDAIVLSEAGIIRLGVSLEDFNYKRLDILPAPAQGIIAVACKRDDEEMKSILKEINHERTYLESLCERTALNEFGGGCSVPFGALAVYDEKNELLKLKAAVVTNDELKNASGEVKCKIDEIDKAVELGKKIGLKLKN</sequence>
<evidence type="ECO:0000250" key="1"/>
<evidence type="ECO:0000305" key="2"/>
<name>HEM3_METJA</name>
<gene>
    <name type="primary">hemC</name>
    <name type="ordered locus">MJ0569</name>
</gene>
<reference key="1">
    <citation type="journal article" date="1996" name="Science">
        <title>Complete genome sequence of the methanogenic archaeon, Methanococcus jannaschii.</title>
        <authorList>
            <person name="Bult C.J."/>
            <person name="White O."/>
            <person name="Olsen G.J."/>
            <person name="Zhou L."/>
            <person name="Fleischmann R.D."/>
            <person name="Sutton G.G."/>
            <person name="Blake J.A."/>
            <person name="FitzGerald L.M."/>
            <person name="Clayton R.A."/>
            <person name="Gocayne J.D."/>
            <person name="Kerlavage A.R."/>
            <person name="Dougherty B.A."/>
            <person name="Tomb J.-F."/>
            <person name="Adams M.D."/>
            <person name="Reich C.I."/>
            <person name="Overbeek R."/>
            <person name="Kirkness E.F."/>
            <person name="Weinstock K.G."/>
            <person name="Merrick J.M."/>
            <person name="Glodek A."/>
            <person name="Scott J.L."/>
            <person name="Geoghagen N.S.M."/>
            <person name="Weidman J.F."/>
            <person name="Fuhrmann J.L."/>
            <person name="Nguyen D."/>
            <person name="Utterback T.R."/>
            <person name="Kelley J.M."/>
            <person name="Peterson J.D."/>
            <person name="Sadow P.W."/>
            <person name="Hanna M.C."/>
            <person name="Cotton M.D."/>
            <person name="Roberts K.M."/>
            <person name="Hurst M.A."/>
            <person name="Kaine B.P."/>
            <person name="Borodovsky M."/>
            <person name="Klenk H.-P."/>
            <person name="Fraser C.M."/>
            <person name="Smith H.O."/>
            <person name="Woese C.R."/>
            <person name="Venter J.C."/>
        </authorList>
    </citation>
    <scope>NUCLEOTIDE SEQUENCE [LARGE SCALE GENOMIC DNA]</scope>
    <source>
        <strain>ATCC 43067 / DSM 2661 / JAL-1 / JCM 10045 / NBRC 100440</strain>
    </source>
</reference>
<protein>
    <recommendedName>
        <fullName>Probable porphobilinogen deaminase</fullName>
        <shortName>PBG</shortName>
        <ecNumber>2.5.1.61</ecNumber>
    </recommendedName>
    <alternativeName>
        <fullName>Hydroxymethylbilane synthase</fullName>
        <shortName>HMBS</shortName>
    </alternativeName>
    <alternativeName>
        <fullName>Pre-uroporphyrinogen synthase</fullName>
    </alternativeName>
</protein>
<comment type="function">
    <text evidence="1">Tetrapolymerization of the monopyrrole PBG into the hydroxymethylbilane pre-uroporphyrinogen in several discrete steps.</text>
</comment>
<comment type="catalytic activity">
    <reaction>
        <text>4 porphobilinogen + H2O = hydroxymethylbilane + 4 NH4(+)</text>
        <dbReference type="Rhea" id="RHEA:13185"/>
        <dbReference type="ChEBI" id="CHEBI:15377"/>
        <dbReference type="ChEBI" id="CHEBI:28938"/>
        <dbReference type="ChEBI" id="CHEBI:57845"/>
        <dbReference type="ChEBI" id="CHEBI:58126"/>
        <dbReference type="EC" id="2.5.1.61"/>
    </reaction>
</comment>
<comment type="cofactor">
    <cofactor evidence="1">
        <name>dipyrromethane</name>
        <dbReference type="ChEBI" id="CHEBI:60342"/>
    </cofactor>
    <text evidence="1">Binds 1 dipyrromethane group covalently.</text>
</comment>
<comment type="pathway">
    <text>Porphyrin-containing compound metabolism; protoporphyrin-IX biosynthesis; coproporphyrinogen-III from 5-aminolevulinate: step 2/4.</text>
</comment>
<comment type="miscellaneous">
    <text evidence="1">The porphobilinogen subunits are added to the dipyrromethane group.</text>
</comment>
<comment type="similarity">
    <text evidence="2">Belongs to the HMBS family.</text>
</comment>
<keyword id="KW-0627">Porphyrin biosynthesis</keyword>
<keyword id="KW-1185">Reference proteome</keyword>
<keyword id="KW-0808">Transferase</keyword>
<dbReference type="EC" id="2.5.1.61"/>
<dbReference type="EMBL" id="L77117">
    <property type="protein sequence ID" value="AAB98563.1"/>
    <property type="molecule type" value="Genomic_DNA"/>
</dbReference>
<dbReference type="PIR" id="A64371">
    <property type="entry name" value="A64371"/>
</dbReference>
<dbReference type="RefSeq" id="WP_010870073.1">
    <property type="nucleotide sequence ID" value="NC_000909.1"/>
</dbReference>
<dbReference type="SMR" id="Q57989"/>
<dbReference type="FunCoup" id="Q57989">
    <property type="interactions" value="271"/>
</dbReference>
<dbReference type="STRING" id="243232.MJ_0569"/>
<dbReference type="PaxDb" id="243232-MJ_0569"/>
<dbReference type="EnsemblBacteria" id="AAB98563">
    <property type="protein sequence ID" value="AAB98563"/>
    <property type="gene ID" value="MJ_0569"/>
</dbReference>
<dbReference type="GeneID" id="1451434"/>
<dbReference type="KEGG" id="mja:MJ_0569"/>
<dbReference type="eggNOG" id="arCOG04299">
    <property type="taxonomic scope" value="Archaea"/>
</dbReference>
<dbReference type="HOGENOM" id="CLU_019704_1_0_2"/>
<dbReference type="InParanoid" id="Q57989"/>
<dbReference type="OrthoDB" id="8042at2157"/>
<dbReference type="PhylomeDB" id="Q57989"/>
<dbReference type="UniPathway" id="UPA00251">
    <property type="reaction ID" value="UER00319"/>
</dbReference>
<dbReference type="Proteomes" id="UP000000805">
    <property type="component" value="Chromosome"/>
</dbReference>
<dbReference type="GO" id="GO:0005737">
    <property type="term" value="C:cytoplasm"/>
    <property type="evidence" value="ECO:0000318"/>
    <property type="project" value="GO_Central"/>
</dbReference>
<dbReference type="GO" id="GO:0004418">
    <property type="term" value="F:hydroxymethylbilane synthase activity"/>
    <property type="evidence" value="ECO:0000318"/>
    <property type="project" value="GO_Central"/>
</dbReference>
<dbReference type="GO" id="GO:0006783">
    <property type="term" value="P:heme biosynthetic process"/>
    <property type="evidence" value="ECO:0000318"/>
    <property type="project" value="GO_Central"/>
</dbReference>
<dbReference type="GO" id="GO:0006782">
    <property type="term" value="P:protoporphyrinogen IX biosynthetic process"/>
    <property type="evidence" value="ECO:0007669"/>
    <property type="project" value="UniProtKB-UniRule"/>
</dbReference>
<dbReference type="CDD" id="cd13647">
    <property type="entry name" value="PBP2_PBGD_2"/>
    <property type="match status" value="1"/>
</dbReference>
<dbReference type="FunFam" id="3.40.190.10:FF:000005">
    <property type="entry name" value="Porphobilinogen deaminase"/>
    <property type="match status" value="1"/>
</dbReference>
<dbReference type="FunFam" id="3.40.190.10:FF:000086">
    <property type="entry name" value="Probable porphobilinogen deaminase"/>
    <property type="match status" value="1"/>
</dbReference>
<dbReference type="Gene3D" id="3.40.190.10">
    <property type="entry name" value="Periplasmic binding protein-like II"/>
    <property type="match status" value="2"/>
</dbReference>
<dbReference type="Gene3D" id="3.30.160.40">
    <property type="entry name" value="Porphobilinogen deaminase, C-terminal domain"/>
    <property type="match status" value="1"/>
</dbReference>
<dbReference type="HAMAP" id="MF_00260">
    <property type="entry name" value="Porphobil_deam"/>
    <property type="match status" value="1"/>
</dbReference>
<dbReference type="InterPro" id="IPR000860">
    <property type="entry name" value="HemC"/>
</dbReference>
<dbReference type="InterPro" id="IPR022419">
    <property type="entry name" value="Porphobilin_deaminase_cofac_BS"/>
</dbReference>
<dbReference type="InterPro" id="IPR022417">
    <property type="entry name" value="Porphobilin_deaminase_N"/>
</dbReference>
<dbReference type="InterPro" id="IPR022418">
    <property type="entry name" value="Porphobilinogen_deaminase_C"/>
</dbReference>
<dbReference type="InterPro" id="IPR036803">
    <property type="entry name" value="Porphobilinogen_deaminase_C_sf"/>
</dbReference>
<dbReference type="NCBIfam" id="TIGR00212">
    <property type="entry name" value="hemC"/>
    <property type="match status" value="1"/>
</dbReference>
<dbReference type="PANTHER" id="PTHR11557">
    <property type="entry name" value="PORPHOBILINOGEN DEAMINASE"/>
    <property type="match status" value="1"/>
</dbReference>
<dbReference type="PANTHER" id="PTHR11557:SF0">
    <property type="entry name" value="PORPHOBILINOGEN DEAMINASE"/>
    <property type="match status" value="1"/>
</dbReference>
<dbReference type="Pfam" id="PF01379">
    <property type="entry name" value="Porphobil_deam"/>
    <property type="match status" value="1"/>
</dbReference>
<dbReference type="Pfam" id="PF03900">
    <property type="entry name" value="Porphobil_deamC"/>
    <property type="match status" value="1"/>
</dbReference>
<dbReference type="PIRSF" id="PIRSF001438">
    <property type="entry name" value="4pyrrol_synth_OHMeBilane_synth"/>
    <property type="match status" value="1"/>
</dbReference>
<dbReference type="PRINTS" id="PR00151">
    <property type="entry name" value="PORPHBDMNASE"/>
</dbReference>
<dbReference type="SUPFAM" id="SSF53850">
    <property type="entry name" value="Periplasmic binding protein-like II"/>
    <property type="match status" value="1"/>
</dbReference>
<dbReference type="SUPFAM" id="SSF54782">
    <property type="entry name" value="Porphobilinogen deaminase (hydroxymethylbilane synthase), C-terminal domain"/>
    <property type="match status" value="1"/>
</dbReference>
<dbReference type="PROSITE" id="PS00533">
    <property type="entry name" value="PORPHOBILINOGEN_DEAM"/>
    <property type="match status" value="1"/>
</dbReference>
<accession>Q57989</accession>
<proteinExistence type="inferred from homology"/>
<feature type="chain" id="PRO_0000143024" description="Probable porphobilinogen deaminase">
    <location>
        <begin position="1"/>
        <end position="292"/>
    </location>
</feature>
<feature type="modified residue" description="S-(dipyrrolylmethanemethyl)cysteine" evidence="1">
    <location>
        <position position="233"/>
    </location>
</feature>